<keyword id="KW-0240">DNA-directed RNA polymerase</keyword>
<keyword id="KW-0548">Nucleotidyltransferase</keyword>
<keyword id="KW-1185">Reference proteome</keyword>
<keyword id="KW-0804">Transcription</keyword>
<keyword id="KW-0808">Transferase</keyword>
<proteinExistence type="inferred from homology"/>
<sequence length="71" mass="8646">MAVFKVFYQHNKEEVIVREHTQTIYVEAQTEEQVRRYLKDRNFNIEFIAKLEGAHLEYEKQSDHFNVEQAE</sequence>
<reference key="1">
    <citation type="journal article" date="2005" name="Proc. Natl. Acad. Sci. U.S.A.">
        <title>Whole genome sequence of Staphylococcus saprophyticus reveals the pathogenesis of uncomplicated urinary tract infection.</title>
        <authorList>
            <person name="Kuroda M."/>
            <person name="Yamashita A."/>
            <person name="Hirakawa H."/>
            <person name="Kumano M."/>
            <person name="Morikawa K."/>
            <person name="Higashide M."/>
            <person name="Maruyama A."/>
            <person name="Inose Y."/>
            <person name="Matoba K."/>
            <person name="Toh H."/>
            <person name="Kuhara S."/>
            <person name="Hattori M."/>
            <person name="Ohta T."/>
        </authorList>
    </citation>
    <scope>NUCLEOTIDE SEQUENCE [LARGE SCALE GENOMIC DNA]</scope>
    <source>
        <strain>ATCC 15305 / DSM 20229 / NCIMB 8711 / NCTC 7292 / S-41</strain>
    </source>
</reference>
<name>RPOY_STAS1</name>
<accession>Q49WL4</accession>
<dbReference type="EC" id="2.7.7.6" evidence="1"/>
<dbReference type="EMBL" id="AP008934">
    <property type="protein sequence ID" value="BAE18845.1"/>
    <property type="molecule type" value="Genomic_DNA"/>
</dbReference>
<dbReference type="RefSeq" id="WP_011303419.1">
    <property type="nucleotide sequence ID" value="NZ_MTGA01000039.1"/>
</dbReference>
<dbReference type="SMR" id="Q49WL4"/>
<dbReference type="GeneID" id="3616511"/>
<dbReference type="KEGG" id="ssp:SSP1700"/>
<dbReference type="PATRIC" id="fig|342451.11.peg.1699"/>
<dbReference type="eggNOG" id="COG5503">
    <property type="taxonomic scope" value="Bacteria"/>
</dbReference>
<dbReference type="HOGENOM" id="CLU_187518_1_0_9"/>
<dbReference type="OrthoDB" id="2147503at2"/>
<dbReference type="Proteomes" id="UP000006371">
    <property type="component" value="Chromosome"/>
</dbReference>
<dbReference type="GO" id="GO:0000428">
    <property type="term" value="C:DNA-directed RNA polymerase complex"/>
    <property type="evidence" value="ECO:0007669"/>
    <property type="project" value="UniProtKB-KW"/>
</dbReference>
<dbReference type="GO" id="GO:0003677">
    <property type="term" value="F:DNA binding"/>
    <property type="evidence" value="ECO:0007669"/>
    <property type="project" value="UniProtKB-UniRule"/>
</dbReference>
<dbReference type="GO" id="GO:0003899">
    <property type="term" value="F:DNA-directed RNA polymerase activity"/>
    <property type="evidence" value="ECO:0007669"/>
    <property type="project" value="UniProtKB-UniRule"/>
</dbReference>
<dbReference type="GO" id="GO:0006351">
    <property type="term" value="P:DNA-templated transcription"/>
    <property type="evidence" value="ECO:0007669"/>
    <property type="project" value="UniProtKB-UniRule"/>
</dbReference>
<dbReference type="Gene3D" id="3.10.20.730">
    <property type="entry name" value="RNAP, epsilon subunit-like"/>
    <property type="match status" value="1"/>
</dbReference>
<dbReference type="HAMAP" id="MF_01553">
    <property type="entry name" value="RNApol_bact_RpoY"/>
    <property type="match status" value="1"/>
</dbReference>
<dbReference type="InterPro" id="IPR009907">
    <property type="entry name" value="RpoY"/>
</dbReference>
<dbReference type="NCBIfam" id="NF010188">
    <property type="entry name" value="PRK13667.1"/>
    <property type="match status" value="1"/>
</dbReference>
<dbReference type="Pfam" id="PF07288">
    <property type="entry name" value="RpoY"/>
    <property type="match status" value="1"/>
</dbReference>
<protein>
    <recommendedName>
        <fullName evidence="1">DNA-directed RNA polymerase subunit epsilon</fullName>
        <shortName evidence="1">RNAP epsilon subunit</shortName>
        <ecNumber evidence="1">2.7.7.6</ecNumber>
    </recommendedName>
    <alternativeName>
        <fullName evidence="1">RNA polymerase epsilon subunit</fullName>
    </alternativeName>
    <alternativeName>
        <fullName evidence="1">Transcriptase subunit epsilon</fullName>
    </alternativeName>
</protein>
<organism>
    <name type="scientific">Staphylococcus saprophyticus subsp. saprophyticus (strain ATCC 15305 / DSM 20229 / NCIMB 8711 / NCTC 7292 / S-41)</name>
    <dbReference type="NCBI Taxonomy" id="342451"/>
    <lineage>
        <taxon>Bacteria</taxon>
        <taxon>Bacillati</taxon>
        <taxon>Bacillota</taxon>
        <taxon>Bacilli</taxon>
        <taxon>Bacillales</taxon>
        <taxon>Staphylococcaceae</taxon>
        <taxon>Staphylococcus</taxon>
    </lineage>
</organism>
<gene>
    <name evidence="1" type="primary">rpoY</name>
    <name type="ordered locus">SSP1700</name>
</gene>
<comment type="function">
    <text evidence="1">A non-essential component of RNA polymerase (RNAP).</text>
</comment>
<comment type="catalytic activity">
    <reaction evidence="1">
        <text>RNA(n) + a ribonucleoside 5'-triphosphate = RNA(n+1) + diphosphate</text>
        <dbReference type="Rhea" id="RHEA:21248"/>
        <dbReference type="Rhea" id="RHEA-COMP:14527"/>
        <dbReference type="Rhea" id="RHEA-COMP:17342"/>
        <dbReference type="ChEBI" id="CHEBI:33019"/>
        <dbReference type="ChEBI" id="CHEBI:61557"/>
        <dbReference type="ChEBI" id="CHEBI:140395"/>
        <dbReference type="EC" id="2.7.7.6"/>
    </reaction>
</comment>
<comment type="subunit">
    <text evidence="1">RNAP is composed of a core of 2 alpha, a beta and a beta' subunit. The core is associated with a delta subunit, and at least one of epsilon or omega. When a sigma factor is associated with the core the holoenzyme is formed, which can initiate transcription.</text>
</comment>
<comment type="similarity">
    <text evidence="1">Belongs to the RNA polymerase subunit epsilon family.</text>
</comment>
<evidence type="ECO:0000255" key="1">
    <source>
        <dbReference type="HAMAP-Rule" id="MF_01553"/>
    </source>
</evidence>
<feature type="chain" id="PRO_0000163142" description="DNA-directed RNA polymerase subunit epsilon">
    <location>
        <begin position="1"/>
        <end position="71"/>
    </location>
</feature>